<accession>B8D7S9</accession>
<organism>
    <name type="scientific">Buchnera aphidicola subsp. Acyrthosiphon pisum (strain Tuc7)</name>
    <dbReference type="NCBI Taxonomy" id="561501"/>
    <lineage>
        <taxon>Bacteria</taxon>
        <taxon>Pseudomonadati</taxon>
        <taxon>Pseudomonadota</taxon>
        <taxon>Gammaproteobacteria</taxon>
        <taxon>Enterobacterales</taxon>
        <taxon>Erwiniaceae</taxon>
        <taxon>Buchnera</taxon>
    </lineage>
</organism>
<sequence length="79" mass="9439">MVKIRLARYGTKKRPFYKLVVADSRFSRNGRFIERLGYFNPIAKGKSEILKLNLERIEHWTNQGAQMSERTKKLIKQKR</sequence>
<evidence type="ECO:0000255" key="1">
    <source>
        <dbReference type="HAMAP-Rule" id="MF_00385"/>
    </source>
</evidence>
<evidence type="ECO:0000305" key="2"/>
<feature type="chain" id="PRO_1000196351" description="Small ribosomal subunit protein bS16">
    <location>
        <begin position="1"/>
        <end position="79"/>
    </location>
</feature>
<proteinExistence type="inferred from homology"/>
<dbReference type="EMBL" id="CP001158">
    <property type="protein sequence ID" value="ACL30194.1"/>
    <property type="molecule type" value="Genomic_DNA"/>
</dbReference>
<dbReference type="RefSeq" id="WP_009874351.1">
    <property type="nucleotide sequence ID" value="NC_011834.1"/>
</dbReference>
<dbReference type="SMR" id="B8D7S9"/>
<dbReference type="KEGG" id="bau:BUAPTUC7_388"/>
<dbReference type="HOGENOM" id="CLU_100590_5_1_6"/>
<dbReference type="GO" id="GO:0005737">
    <property type="term" value="C:cytoplasm"/>
    <property type="evidence" value="ECO:0007669"/>
    <property type="project" value="UniProtKB-ARBA"/>
</dbReference>
<dbReference type="GO" id="GO:0015935">
    <property type="term" value="C:small ribosomal subunit"/>
    <property type="evidence" value="ECO:0007669"/>
    <property type="project" value="TreeGrafter"/>
</dbReference>
<dbReference type="GO" id="GO:0003735">
    <property type="term" value="F:structural constituent of ribosome"/>
    <property type="evidence" value="ECO:0007669"/>
    <property type="project" value="InterPro"/>
</dbReference>
<dbReference type="GO" id="GO:0006412">
    <property type="term" value="P:translation"/>
    <property type="evidence" value="ECO:0007669"/>
    <property type="project" value="UniProtKB-UniRule"/>
</dbReference>
<dbReference type="Gene3D" id="3.30.1320.10">
    <property type="match status" value="1"/>
</dbReference>
<dbReference type="HAMAP" id="MF_00385">
    <property type="entry name" value="Ribosomal_bS16"/>
    <property type="match status" value="1"/>
</dbReference>
<dbReference type="InterPro" id="IPR000307">
    <property type="entry name" value="Ribosomal_bS16"/>
</dbReference>
<dbReference type="InterPro" id="IPR023803">
    <property type="entry name" value="Ribosomal_bS16_dom_sf"/>
</dbReference>
<dbReference type="NCBIfam" id="TIGR00002">
    <property type="entry name" value="S16"/>
    <property type="match status" value="1"/>
</dbReference>
<dbReference type="PANTHER" id="PTHR12919">
    <property type="entry name" value="30S RIBOSOMAL PROTEIN S16"/>
    <property type="match status" value="1"/>
</dbReference>
<dbReference type="PANTHER" id="PTHR12919:SF20">
    <property type="entry name" value="SMALL RIBOSOMAL SUBUNIT PROTEIN BS16M"/>
    <property type="match status" value="1"/>
</dbReference>
<dbReference type="Pfam" id="PF00886">
    <property type="entry name" value="Ribosomal_S16"/>
    <property type="match status" value="1"/>
</dbReference>
<dbReference type="SUPFAM" id="SSF54565">
    <property type="entry name" value="Ribosomal protein S16"/>
    <property type="match status" value="1"/>
</dbReference>
<keyword id="KW-0687">Ribonucleoprotein</keyword>
<keyword id="KW-0689">Ribosomal protein</keyword>
<name>RS16_BUCAT</name>
<comment type="similarity">
    <text evidence="1">Belongs to the bacterial ribosomal protein bS16 family.</text>
</comment>
<gene>
    <name evidence="1" type="primary">rpsP</name>
    <name type="ordered locus">BUAPTUC7_388</name>
</gene>
<protein>
    <recommendedName>
        <fullName evidence="1">Small ribosomal subunit protein bS16</fullName>
    </recommendedName>
    <alternativeName>
        <fullName evidence="2">30S ribosomal protein S16</fullName>
    </alternativeName>
</protein>
<reference key="1">
    <citation type="journal article" date="2009" name="Science">
        <title>The dynamics and time scale of ongoing genomic erosion in symbiotic bacteria.</title>
        <authorList>
            <person name="Moran N.A."/>
            <person name="McLaughlin H.J."/>
            <person name="Sorek R."/>
        </authorList>
    </citation>
    <scope>NUCLEOTIDE SEQUENCE [LARGE SCALE GENOMIC DNA]</scope>
    <source>
        <strain>Tuc7</strain>
    </source>
</reference>